<accession>O42928</accession>
<reference key="1">
    <citation type="journal article" date="2002" name="Nature">
        <title>The genome sequence of Schizosaccharomyces pombe.</title>
        <authorList>
            <person name="Wood V."/>
            <person name="Gwilliam R."/>
            <person name="Rajandream M.A."/>
            <person name="Lyne M.H."/>
            <person name="Lyne R."/>
            <person name="Stewart A."/>
            <person name="Sgouros J.G."/>
            <person name="Peat N."/>
            <person name="Hayles J."/>
            <person name="Baker S.G."/>
            <person name="Basham D."/>
            <person name="Bowman S."/>
            <person name="Brooks K."/>
            <person name="Brown D."/>
            <person name="Brown S."/>
            <person name="Chillingworth T."/>
            <person name="Churcher C.M."/>
            <person name="Collins M."/>
            <person name="Connor R."/>
            <person name="Cronin A."/>
            <person name="Davis P."/>
            <person name="Feltwell T."/>
            <person name="Fraser A."/>
            <person name="Gentles S."/>
            <person name="Goble A."/>
            <person name="Hamlin N."/>
            <person name="Harris D.E."/>
            <person name="Hidalgo J."/>
            <person name="Hodgson G."/>
            <person name="Holroyd S."/>
            <person name="Hornsby T."/>
            <person name="Howarth S."/>
            <person name="Huckle E.J."/>
            <person name="Hunt S."/>
            <person name="Jagels K."/>
            <person name="James K.D."/>
            <person name="Jones L."/>
            <person name="Jones M."/>
            <person name="Leather S."/>
            <person name="McDonald S."/>
            <person name="McLean J."/>
            <person name="Mooney P."/>
            <person name="Moule S."/>
            <person name="Mungall K.L."/>
            <person name="Murphy L.D."/>
            <person name="Niblett D."/>
            <person name="Odell C."/>
            <person name="Oliver K."/>
            <person name="O'Neil S."/>
            <person name="Pearson D."/>
            <person name="Quail M.A."/>
            <person name="Rabbinowitsch E."/>
            <person name="Rutherford K.M."/>
            <person name="Rutter S."/>
            <person name="Saunders D."/>
            <person name="Seeger K."/>
            <person name="Sharp S."/>
            <person name="Skelton J."/>
            <person name="Simmonds M.N."/>
            <person name="Squares R."/>
            <person name="Squares S."/>
            <person name="Stevens K."/>
            <person name="Taylor K."/>
            <person name="Taylor R.G."/>
            <person name="Tivey A."/>
            <person name="Walsh S.V."/>
            <person name="Warren T."/>
            <person name="Whitehead S."/>
            <person name="Woodward J.R."/>
            <person name="Volckaert G."/>
            <person name="Aert R."/>
            <person name="Robben J."/>
            <person name="Grymonprez B."/>
            <person name="Weltjens I."/>
            <person name="Vanstreels E."/>
            <person name="Rieger M."/>
            <person name="Schaefer M."/>
            <person name="Mueller-Auer S."/>
            <person name="Gabel C."/>
            <person name="Fuchs M."/>
            <person name="Duesterhoeft A."/>
            <person name="Fritzc C."/>
            <person name="Holzer E."/>
            <person name="Moestl D."/>
            <person name="Hilbert H."/>
            <person name="Borzym K."/>
            <person name="Langer I."/>
            <person name="Beck A."/>
            <person name="Lehrach H."/>
            <person name="Reinhardt R."/>
            <person name="Pohl T.M."/>
            <person name="Eger P."/>
            <person name="Zimmermann W."/>
            <person name="Wedler H."/>
            <person name="Wambutt R."/>
            <person name="Purnelle B."/>
            <person name="Goffeau A."/>
            <person name="Cadieu E."/>
            <person name="Dreano S."/>
            <person name="Gloux S."/>
            <person name="Lelaure V."/>
            <person name="Mottier S."/>
            <person name="Galibert F."/>
            <person name="Aves S.J."/>
            <person name="Xiang Z."/>
            <person name="Hunt C."/>
            <person name="Moore K."/>
            <person name="Hurst S.M."/>
            <person name="Lucas M."/>
            <person name="Rochet M."/>
            <person name="Gaillardin C."/>
            <person name="Tallada V.A."/>
            <person name="Garzon A."/>
            <person name="Thode G."/>
            <person name="Daga R.R."/>
            <person name="Cruzado L."/>
            <person name="Jimenez J."/>
            <person name="Sanchez M."/>
            <person name="del Rey F."/>
            <person name="Benito J."/>
            <person name="Dominguez A."/>
            <person name="Revuelta J.L."/>
            <person name="Moreno S."/>
            <person name="Armstrong J."/>
            <person name="Forsburg S.L."/>
            <person name="Cerutti L."/>
            <person name="Lowe T."/>
            <person name="McCombie W.R."/>
            <person name="Paulsen I."/>
            <person name="Potashkin J."/>
            <person name="Shpakovski G.V."/>
            <person name="Ussery D."/>
            <person name="Barrell B.G."/>
            <person name="Nurse P."/>
        </authorList>
    </citation>
    <scope>NUCLEOTIDE SEQUENCE [LARGE SCALE GENOMIC DNA]</scope>
    <source>
        <strain>972 / ATCC 24843</strain>
    </source>
</reference>
<reference key="2">
    <citation type="journal article" date="2006" name="Nat. Biotechnol.">
        <title>ORFeome cloning and global analysis of protein localization in the fission yeast Schizosaccharomyces pombe.</title>
        <authorList>
            <person name="Matsuyama A."/>
            <person name="Arai R."/>
            <person name="Yashiroda Y."/>
            <person name="Shirai A."/>
            <person name="Kamata A."/>
            <person name="Sekido S."/>
            <person name="Kobayashi Y."/>
            <person name="Hashimoto A."/>
            <person name="Hamamoto M."/>
            <person name="Hiraoka Y."/>
            <person name="Horinouchi S."/>
            <person name="Yoshida M."/>
        </authorList>
    </citation>
    <scope>SUBCELLULAR LOCATION [LARGE SCALE ANALYSIS]</scope>
</reference>
<feature type="chain" id="PRO_0000303928" description="Uncharacterized protein C16C6.04">
    <location>
        <begin position="1"/>
        <end position="350"/>
    </location>
</feature>
<feature type="region of interest" description="Disordered" evidence="1">
    <location>
        <begin position="1"/>
        <end position="21"/>
    </location>
</feature>
<feature type="region of interest" description="Disordered" evidence="1">
    <location>
        <begin position="237"/>
        <end position="266"/>
    </location>
</feature>
<feature type="region of interest" description="Disordered" evidence="1">
    <location>
        <begin position="278"/>
        <end position="298"/>
    </location>
</feature>
<feature type="compositionally biased region" description="Polar residues" evidence="1">
    <location>
        <begin position="10"/>
        <end position="21"/>
    </location>
</feature>
<feature type="compositionally biased region" description="Polar residues" evidence="1">
    <location>
        <begin position="246"/>
        <end position="259"/>
    </location>
</feature>
<feature type="compositionally biased region" description="Basic residues" evidence="1">
    <location>
        <begin position="287"/>
        <end position="298"/>
    </location>
</feature>
<protein>
    <recommendedName>
        <fullName>Uncharacterized protein C16C6.04</fullName>
    </recommendedName>
</protein>
<gene>
    <name type="ORF">SPBC16C6.04</name>
</gene>
<comment type="subcellular location">
    <subcellularLocation>
        <location evidence="2">Nucleus</location>
    </subcellularLocation>
</comment>
<dbReference type="EMBL" id="CU329671">
    <property type="protein sequence ID" value="CAA16912.1"/>
    <property type="molecule type" value="Genomic_DNA"/>
</dbReference>
<dbReference type="PIR" id="T39555">
    <property type="entry name" value="T39555"/>
</dbReference>
<dbReference type="BioGRID" id="276306">
    <property type="interactions" value="18"/>
</dbReference>
<dbReference type="STRING" id="284812.O42928"/>
<dbReference type="iPTMnet" id="O42928"/>
<dbReference type="PaxDb" id="4896-SPBC16C6.04.1"/>
<dbReference type="EnsemblFungi" id="SPBC16C6.04.1">
    <property type="protein sequence ID" value="SPBC16C6.04.1:pep"/>
    <property type="gene ID" value="SPBC16C6.04"/>
</dbReference>
<dbReference type="KEGG" id="spo:2539754"/>
<dbReference type="PomBase" id="SPBC16C6.04"/>
<dbReference type="VEuPathDB" id="FungiDB:SPBC16C6.04"/>
<dbReference type="eggNOG" id="ENOG502SDYM">
    <property type="taxonomic scope" value="Eukaryota"/>
</dbReference>
<dbReference type="HOGENOM" id="CLU_792634_0_0_1"/>
<dbReference type="InParanoid" id="O42928"/>
<dbReference type="OMA" id="KMFQRVA"/>
<dbReference type="PRO" id="PR:O42928"/>
<dbReference type="Proteomes" id="UP000002485">
    <property type="component" value="Chromosome II"/>
</dbReference>
<dbReference type="GO" id="GO:0005634">
    <property type="term" value="C:nucleus"/>
    <property type="evidence" value="ECO:0007005"/>
    <property type="project" value="PomBase"/>
</dbReference>
<dbReference type="GO" id="GO:0035861">
    <property type="term" value="C:site of double-strand break"/>
    <property type="evidence" value="ECO:0000314"/>
    <property type="project" value="PomBase"/>
</dbReference>
<organism>
    <name type="scientific">Schizosaccharomyces pombe (strain 972 / ATCC 24843)</name>
    <name type="common">Fission yeast</name>
    <dbReference type="NCBI Taxonomy" id="284812"/>
    <lineage>
        <taxon>Eukaryota</taxon>
        <taxon>Fungi</taxon>
        <taxon>Dikarya</taxon>
        <taxon>Ascomycota</taxon>
        <taxon>Taphrinomycotina</taxon>
        <taxon>Schizosaccharomycetes</taxon>
        <taxon>Schizosaccharomycetales</taxon>
        <taxon>Schizosaccharomycetaceae</taxon>
        <taxon>Schizosaccharomyces</taxon>
    </lineage>
</organism>
<evidence type="ECO:0000256" key="1">
    <source>
        <dbReference type="SAM" id="MobiDB-lite"/>
    </source>
</evidence>
<evidence type="ECO:0000269" key="2">
    <source>
    </source>
</evidence>
<proteinExistence type="predicted"/>
<name>YBD4_SCHPO</name>
<keyword id="KW-0539">Nucleus</keyword>
<keyword id="KW-1185">Reference proteome</keyword>
<sequence length="350" mass="38762">MDSFHPTPGKPTTATSNSSLNFFVRNREKSIRCSSLHQTFTAPSPEASPSIGLRYVNYSMSDETDESMFPLDSELTDMEDDDTEYISDSTTDLPSAAMARGTRQLSYNENLDQRSFSKTPNKHIEVKNLKDLCSPSHSGRISKSLCPVLRRKSLLPKPKMFQRVASALYEESSPLELEIRSESEFSKMFFEPKKSSSFVSRAASPAMVGPGVPFYSSITGANGNVLAPSGSLKAVENSDVIESSAEDSSNTDNPSTKPSNEMPISPLLSSSVFFKDTEMSTPNSNHSRSRTPSSKKRTRWGEEIIDLSKRRAVSPSIYYDLDKKCSPIHSVMVSPLKIKDTHEVLMNLKL</sequence>